<name>RLMM_ECOLI</name>
<proteinExistence type="evidence at protein level"/>
<organism>
    <name type="scientific">Escherichia coli (strain K12)</name>
    <dbReference type="NCBI Taxonomy" id="83333"/>
    <lineage>
        <taxon>Bacteria</taxon>
        <taxon>Pseudomonadati</taxon>
        <taxon>Pseudomonadota</taxon>
        <taxon>Gammaproteobacteria</taxon>
        <taxon>Enterobacterales</taxon>
        <taxon>Enterobacteriaceae</taxon>
        <taxon>Escherichia</taxon>
    </lineage>
</organism>
<comment type="function">
    <text evidence="1 2">Catalyzes the 2'-O-methylation at nucleotide C2498 in 23S rRNA. Modifies C2498 in naked 23S rRNA, but not in assembled 50S subunits or ribosomes.</text>
</comment>
<comment type="catalytic activity">
    <reaction evidence="1 2">
        <text>cytidine(2498) in 23S rRNA + S-adenosyl-L-methionine = 2'-O-methylcytidine(2498) in 23S rRNA + S-adenosyl-L-homocysteine + H(+)</text>
        <dbReference type="Rhea" id="RHEA:42788"/>
        <dbReference type="Rhea" id="RHEA-COMP:10244"/>
        <dbReference type="Rhea" id="RHEA-COMP:10245"/>
        <dbReference type="ChEBI" id="CHEBI:15378"/>
        <dbReference type="ChEBI" id="CHEBI:57856"/>
        <dbReference type="ChEBI" id="CHEBI:59789"/>
        <dbReference type="ChEBI" id="CHEBI:74495"/>
        <dbReference type="ChEBI" id="CHEBI:82748"/>
        <dbReference type="EC" id="2.1.1.186"/>
    </reaction>
</comment>
<comment type="subunit">
    <text evidence="2">Monomer.</text>
</comment>
<comment type="subcellular location">
    <subcellularLocation>
        <location evidence="3">Cytoplasm</location>
    </subcellularLocation>
</comment>
<comment type="domain">
    <text evidence="2">Consists of two structural domains: an N-terminal THUMP domain followed by a C-terminal catalytic Rossmann-like fold MTase domain in a novel arrangement. The two domains are connected by a long loop.</text>
</comment>
<comment type="similarity">
    <text evidence="3">Belongs to the class I-like SAM-binding methyltransferase superfamily. RNA methyltransferase RlmE family. RlmM subfamily.</text>
</comment>
<reference key="1">
    <citation type="journal article" date="1995" name="Microbiology">
        <title>GcvA, a LysR-type transcriptional regulator protein, activates expression of the cloned Citrobacter freundii ampC beta-lactamase gene in Escherichia coli: cross-talk between DNA-binding proteins.</title>
        <authorList>
            <person name="Everett M.J."/>
            <person name="Walsh T."/>
            <person name="Guay G."/>
            <person name="Bennett P.M."/>
        </authorList>
    </citation>
    <scope>NUCLEOTIDE SEQUENCE [GENOMIC DNA]</scope>
    <source>
        <strain>K12</strain>
    </source>
</reference>
<reference key="2">
    <citation type="journal article" date="1997" name="Science">
        <title>The complete genome sequence of Escherichia coli K-12.</title>
        <authorList>
            <person name="Blattner F.R."/>
            <person name="Plunkett G. III"/>
            <person name="Bloch C.A."/>
            <person name="Perna N.T."/>
            <person name="Burland V."/>
            <person name="Riley M."/>
            <person name="Collado-Vides J."/>
            <person name="Glasner J.D."/>
            <person name="Rode C.K."/>
            <person name="Mayhew G.F."/>
            <person name="Gregor J."/>
            <person name="Davis N.W."/>
            <person name="Kirkpatrick H.A."/>
            <person name="Goeden M.A."/>
            <person name="Rose D.J."/>
            <person name="Mau B."/>
            <person name="Shao Y."/>
        </authorList>
    </citation>
    <scope>NUCLEOTIDE SEQUENCE [LARGE SCALE GENOMIC DNA]</scope>
    <source>
        <strain>K12 / MG1655 / ATCC 47076</strain>
    </source>
</reference>
<reference key="3">
    <citation type="journal article" date="2006" name="Mol. Syst. Biol.">
        <title>Highly accurate genome sequences of Escherichia coli K-12 strains MG1655 and W3110.</title>
        <authorList>
            <person name="Hayashi K."/>
            <person name="Morooka N."/>
            <person name="Yamamoto Y."/>
            <person name="Fujita K."/>
            <person name="Isono K."/>
            <person name="Choi S."/>
            <person name="Ohtsubo E."/>
            <person name="Baba T."/>
            <person name="Wanner B.L."/>
            <person name="Mori H."/>
            <person name="Horiuchi T."/>
        </authorList>
    </citation>
    <scope>NUCLEOTIDE SEQUENCE [LARGE SCALE GENOMIC DNA]</scope>
    <source>
        <strain>K12 / W3110 / ATCC 27325 / DSM 5911</strain>
    </source>
</reference>
<reference key="4">
    <citation type="journal article" date="2000" name="Acta Microbiol. Pol.">
        <title>Prediction of a novel RNA 2'-O-ribose methyltransferase subfamily encoded by the Escherichia coli YgdE open reading frame and its orthologs.</title>
        <authorList>
            <person name="Bujnicki J.M."/>
            <person name="Rychlewski L."/>
        </authorList>
    </citation>
    <scope>PUTATIVE FUNCTION AS METHYLTRANSFERASE</scope>
</reference>
<reference key="5">
    <citation type="journal article" date="2003" name="Gene">
        <title>Molecular phylogenetics of the RrmJ/fibrillarin superfamily of ribose 2'-O-methyltransferases.</title>
        <authorList>
            <person name="Feder M."/>
            <person name="Pas J."/>
            <person name="Wyrwicz L.S."/>
            <person name="Bujnicki J.M."/>
        </authorList>
    </citation>
    <scope>PUTATIVE FUNCTION AS METHYLTRANSFERASE</scope>
</reference>
<reference key="6">
    <citation type="journal article" date="2009" name="Mol. Microbiol.">
        <title>YgdE is the 2'-O-ribose methyltransferase RlmM specific for nucleotide C2498 in bacterial 23S rRNA.</title>
        <authorList>
            <person name="Purta E."/>
            <person name="O'Connor M."/>
            <person name="Bujnicki J.M."/>
            <person name="Douthwaite S."/>
        </authorList>
    </citation>
    <scope>FUNCTION AS A METHYLTRANSFERASE</scope>
    <scope>CATALYTIC ACTIVITY</scope>
</reference>
<reference key="7">
    <citation type="journal article" date="2012" name="Nucleic Acids Res.">
        <title>Crystal structure of RlmM, the 2'O-ribose methyltransferase for C2498 of Escherichia coli 23S rRNA.</title>
        <authorList>
            <person name="Punekar A.S."/>
            <person name="Shepherd T.R."/>
            <person name="Liljeruhm J."/>
            <person name="Forster A.C."/>
            <person name="Selmer M."/>
        </authorList>
    </citation>
    <scope>X-RAY CRYSTALLOGRAPHY (1.9 ANGSTROMS) OF APOPENZYME AND IN COMPLEX WITH S-ADENOSYL-L-METHIONINE</scope>
    <scope>FUNCTION</scope>
    <scope>CATALYTIC ACTIVITY</scope>
    <scope>ACTIVE SITE</scope>
    <scope>DOMAIN</scope>
    <scope>SUBUNIT</scope>
</reference>
<gene>
    <name type="primary">rlmM</name>
    <name type="synonym">ygdE</name>
    <name type="ordered locus">b2806</name>
    <name type="ordered locus">JW2777</name>
</gene>
<dbReference type="EC" id="2.1.1.186"/>
<dbReference type="EMBL" id="X73413">
    <property type="protein sequence ID" value="CAA51815.1"/>
    <property type="molecule type" value="Genomic_DNA"/>
</dbReference>
<dbReference type="EMBL" id="U29581">
    <property type="protein sequence ID" value="AAB40456.1"/>
    <property type="molecule type" value="Genomic_DNA"/>
</dbReference>
<dbReference type="EMBL" id="U00096">
    <property type="protein sequence ID" value="AAC75848.1"/>
    <property type="molecule type" value="Genomic_DNA"/>
</dbReference>
<dbReference type="EMBL" id="AP009048">
    <property type="protein sequence ID" value="BAE76878.1"/>
    <property type="molecule type" value="Genomic_DNA"/>
</dbReference>
<dbReference type="PIR" id="I41067">
    <property type="entry name" value="I41067"/>
</dbReference>
<dbReference type="RefSeq" id="NP_417286.1">
    <property type="nucleotide sequence ID" value="NC_000913.3"/>
</dbReference>
<dbReference type="RefSeq" id="WP_001045520.1">
    <property type="nucleotide sequence ID" value="NZ_STEB01000030.1"/>
</dbReference>
<dbReference type="PDB" id="4ATN">
    <property type="method" value="X-ray"/>
    <property type="resolution" value="1.95 A"/>
    <property type="chains" value="A=1-366"/>
</dbReference>
<dbReference type="PDB" id="4AUK">
    <property type="method" value="X-ray"/>
    <property type="resolution" value="1.90 A"/>
    <property type="chains" value="A/B=1-366"/>
</dbReference>
<dbReference type="PDB" id="4B17">
    <property type="method" value="X-ray"/>
    <property type="resolution" value="2.60 A"/>
    <property type="chains" value="A=1-366"/>
</dbReference>
<dbReference type="PDBsum" id="4ATN"/>
<dbReference type="PDBsum" id="4AUK"/>
<dbReference type="PDBsum" id="4B17"/>
<dbReference type="SMR" id="P0ADR6"/>
<dbReference type="BioGRID" id="4263537">
    <property type="interactions" value="55"/>
</dbReference>
<dbReference type="FunCoup" id="P0ADR6">
    <property type="interactions" value="39"/>
</dbReference>
<dbReference type="IntAct" id="P0ADR6">
    <property type="interactions" value="14"/>
</dbReference>
<dbReference type="STRING" id="511145.b2806"/>
<dbReference type="jPOST" id="P0ADR6"/>
<dbReference type="PaxDb" id="511145-b2806"/>
<dbReference type="EnsemblBacteria" id="AAC75848">
    <property type="protein sequence ID" value="AAC75848"/>
    <property type="gene ID" value="b2806"/>
</dbReference>
<dbReference type="GeneID" id="75203803"/>
<dbReference type="GeneID" id="947283"/>
<dbReference type="KEGG" id="ecj:JW2777"/>
<dbReference type="KEGG" id="eco:b2806"/>
<dbReference type="KEGG" id="ecoc:C3026_15425"/>
<dbReference type="PATRIC" id="fig|1411691.4.peg.3927"/>
<dbReference type="EchoBASE" id="EB1742"/>
<dbReference type="eggNOG" id="COG2933">
    <property type="taxonomic scope" value="Bacteria"/>
</dbReference>
<dbReference type="HOGENOM" id="CLU_043780_0_0_6"/>
<dbReference type="InParanoid" id="P0ADR6"/>
<dbReference type="OMA" id="PVDWMVC"/>
<dbReference type="OrthoDB" id="154490at2"/>
<dbReference type="PhylomeDB" id="P0ADR6"/>
<dbReference type="BioCyc" id="EcoCyc:EG11794-MONOMER"/>
<dbReference type="BioCyc" id="MetaCyc:EG11794-MONOMER"/>
<dbReference type="BRENDA" id="2.1.1.186">
    <property type="organism ID" value="2026"/>
</dbReference>
<dbReference type="EvolutionaryTrace" id="P0ADR6"/>
<dbReference type="PRO" id="PR:P0ADR6"/>
<dbReference type="Proteomes" id="UP000000625">
    <property type="component" value="Chromosome"/>
</dbReference>
<dbReference type="GO" id="GO:0005737">
    <property type="term" value="C:cytoplasm"/>
    <property type="evidence" value="ECO:0007669"/>
    <property type="project" value="UniProtKB-SubCell"/>
</dbReference>
<dbReference type="GO" id="GO:0070677">
    <property type="term" value="F:rRNA (cytosine-2'-O-)-methyltransferase activity"/>
    <property type="evidence" value="ECO:0000314"/>
    <property type="project" value="EcoCyc"/>
</dbReference>
<dbReference type="GO" id="GO:0006364">
    <property type="term" value="P:rRNA processing"/>
    <property type="evidence" value="ECO:0000315"/>
    <property type="project" value="EcoCyc"/>
</dbReference>
<dbReference type="FunFam" id="3.30.2300.20:FF:000001">
    <property type="entry name" value="Ribosomal RNA large subunit methyltransferase M"/>
    <property type="match status" value="1"/>
</dbReference>
<dbReference type="FunFam" id="3.30.70.2810:FF:000001">
    <property type="entry name" value="Ribosomal RNA large subunit methyltransferase M"/>
    <property type="match status" value="1"/>
</dbReference>
<dbReference type="FunFam" id="3.40.50.150:FF:000020">
    <property type="entry name" value="Ribosomal RNA large subunit methyltransferase M"/>
    <property type="match status" value="1"/>
</dbReference>
<dbReference type="Gene3D" id="3.30.2300.20">
    <property type="match status" value="1"/>
</dbReference>
<dbReference type="Gene3D" id="3.30.70.2810">
    <property type="match status" value="1"/>
</dbReference>
<dbReference type="Gene3D" id="3.40.50.150">
    <property type="entry name" value="Vaccinia Virus protein VP39"/>
    <property type="match status" value="1"/>
</dbReference>
<dbReference type="HAMAP" id="MF_01551">
    <property type="entry name" value="23SrRNA_methyltr_M"/>
    <property type="match status" value="1"/>
</dbReference>
<dbReference type="InterPro" id="IPR040739">
    <property type="entry name" value="RlmM_FDX"/>
</dbReference>
<dbReference type="InterPro" id="IPR048646">
    <property type="entry name" value="RlmM_THUMP-like"/>
</dbReference>
<dbReference type="InterPro" id="IPR002877">
    <property type="entry name" value="RNA_MeTrfase_FtsJ_dom"/>
</dbReference>
<dbReference type="InterPro" id="IPR011224">
    <property type="entry name" value="rRNA_MeTrfase_M"/>
</dbReference>
<dbReference type="InterPro" id="IPR029063">
    <property type="entry name" value="SAM-dependent_MTases_sf"/>
</dbReference>
<dbReference type="NCBIfam" id="NF008734">
    <property type="entry name" value="PRK11760.1"/>
    <property type="match status" value="1"/>
</dbReference>
<dbReference type="PANTHER" id="PTHR37524">
    <property type="entry name" value="RIBOSOMAL RNA LARGE SUBUNIT METHYLTRANSFERASE M"/>
    <property type="match status" value="1"/>
</dbReference>
<dbReference type="PANTHER" id="PTHR37524:SF2">
    <property type="entry name" value="RIBOSOMAL RNA METHYLTRANSFERASE FTSJ DOMAIN-CONTAINING PROTEIN"/>
    <property type="match status" value="1"/>
</dbReference>
<dbReference type="Pfam" id="PF01728">
    <property type="entry name" value="FtsJ"/>
    <property type="match status" value="1"/>
</dbReference>
<dbReference type="Pfam" id="PF18125">
    <property type="entry name" value="RlmM_FDX"/>
    <property type="match status" value="1"/>
</dbReference>
<dbReference type="Pfam" id="PF21239">
    <property type="entry name" value="RLMM_N"/>
    <property type="match status" value="1"/>
</dbReference>
<dbReference type="PIRSF" id="PIRSF028774">
    <property type="entry name" value="UCP028774"/>
    <property type="match status" value="1"/>
</dbReference>
<dbReference type="SUPFAM" id="SSF53335">
    <property type="entry name" value="S-adenosyl-L-methionine-dependent methyltransferases"/>
    <property type="match status" value="1"/>
</dbReference>
<keyword id="KW-0002">3D-structure</keyword>
<keyword id="KW-0963">Cytoplasm</keyword>
<keyword id="KW-0489">Methyltransferase</keyword>
<keyword id="KW-1185">Reference proteome</keyword>
<keyword id="KW-0698">rRNA processing</keyword>
<keyword id="KW-0949">S-adenosyl-L-methionine</keyword>
<keyword id="KW-0808">Transferase</keyword>
<accession>P0ADR6</accession>
<accession>P32066</accession>
<accession>Q2MA28</accession>
<protein>
    <recommendedName>
        <fullName>Ribosomal RNA large subunit methyltransferase M</fullName>
        <ecNumber>2.1.1.186</ecNumber>
    </recommendedName>
    <alternativeName>
        <fullName>23S rRNA (cytidine2498-2'-O)-methyltransferase</fullName>
    </alternativeName>
    <alternativeName>
        <fullName>23S rRNA 2'-O-ribose methyltransferase RlmM</fullName>
    </alternativeName>
</protein>
<feature type="chain" id="PRO_0000070402" description="Ribosomal RNA large subunit methyltransferase M">
    <location>
        <begin position="1"/>
        <end position="366"/>
    </location>
</feature>
<feature type="active site" description="Proton acceptor" evidence="4">
    <location>
        <position position="306"/>
    </location>
</feature>
<feature type="binding site" evidence="2">
    <location>
        <position position="188"/>
    </location>
    <ligand>
        <name>S-adenosyl-L-methionine</name>
        <dbReference type="ChEBI" id="CHEBI:59789"/>
    </ligand>
</feature>
<feature type="binding site">
    <location>
        <begin position="221"/>
        <end position="224"/>
    </location>
    <ligand>
        <name>S-adenosyl-L-methionine</name>
        <dbReference type="ChEBI" id="CHEBI:59789"/>
    </ligand>
</feature>
<feature type="binding site" evidence="2">
    <location>
        <position position="240"/>
    </location>
    <ligand>
        <name>S-adenosyl-L-methionine</name>
        <dbReference type="ChEBI" id="CHEBI:59789"/>
    </ligand>
</feature>
<feature type="binding site" evidence="2">
    <location>
        <position position="260"/>
    </location>
    <ligand>
        <name>S-adenosyl-L-methionine</name>
        <dbReference type="ChEBI" id="CHEBI:59789"/>
    </ligand>
</feature>
<feature type="binding site" evidence="2">
    <location>
        <position position="277"/>
    </location>
    <ligand>
        <name>S-adenosyl-L-methionine</name>
        <dbReference type="ChEBI" id="CHEBI:59789"/>
    </ligand>
</feature>
<feature type="strand" evidence="5">
    <location>
        <begin position="3"/>
        <end position="7"/>
    </location>
</feature>
<feature type="helix" evidence="5">
    <location>
        <begin position="13"/>
        <end position="26"/>
    </location>
</feature>
<feature type="strand" evidence="5">
    <location>
        <begin position="31"/>
        <end position="34"/>
    </location>
</feature>
<feature type="strand" evidence="5">
    <location>
        <begin position="40"/>
        <end position="48"/>
    </location>
</feature>
<feature type="helix" evidence="5">
    <location>
        <begin position="51"/>
        <end position="58"/>
    </location>
</feature>
<feature type="helix" evidence="5">
    <location>
        <begin position="61"/>
        <end position="63"/>
    </location>
</feature>
<feature type="strand" evidence="5">
    <location>
        <begin position="68"/>
        <end position="73"/>
    </location>
</feature>
<feature type="helix" evidence="5">
    <location>
        <begin position="86"/>
        <end position="93"/>
    </location>
</feature>
<feature type="turn" evidence="5">
    <location>
        <begin position="94"/>
        <end position="96"/>
    </location>
</feature>
<feature type="strand" evidence="5">
    <location>
        <begin position="99"/>
        <end position="106"/>
    </location>
</feature>
<feature type="strand" evidence="5">
    <location>
        <begin position="109"/>
        <end position="111"/>
    </location>
</feature>
<feature type="helix" evidence="5">
    <location>
        <begin position="114"/>
        <end position="133"/>
    </location>
</feature>
<feature type="strand" evidence="5">
    <location>
        <begin position="147"/>
        <end position="154"/>
    </location>
</feature>
<feature type="strand" evidence="5">
    <location>
        <begin position="157"/>
        <end position="163"/>
    </location>
</feature>
<feature type="helix" evidence="5">
    <location>
        <begin position="172"/>
        <end position="174"/>
    </location>
</feature>
<feature type="helix" evidence="5">
    <location>
        <begin position="189"/>
        <end position="199"/>
    </location>
</feature>
<feature type="helix" evidence="5">
    <location>
        <begin position="202"/>
        <end position="204"/>
    </location>
</feature>
<feature type="helix" evidence="5">
    <location>
        <begin position="205"/>
        <end position="208"/>
    </location>
</feature>
<feature type="strand" evidence="5">
    <location>
        <begin position="214"/>
        <end position="218"/>
    </location>
</feature>
<feature type="helix" evidence="5">
    <location>
        <begin position="224"/>
        <end position="231"/>
    </location>
</feature>
<feature type="strand" evidence="5">
    <location>
        <begin position="235"/>
        <end position="239"/>
    </location>
</feature>
<feature type="helix" evidence="5">
    <location>
        <begin position="246"/>
        <end position="249"/>
    </location>
</feature>
<feature type="turn" evidence="5">
    <location>
        <begin position="250"/>
        <end position="252"/>
    </location>
</feature>
<feature type="strand" evidence="5">
    <location>
        <begin position="254"/>
        <end position="257"/>
    </location>
</feature>
<feature type="turn" evidence="5">
    <location>
        <begin position="261"/>
        <end position="263"/>
    </location>
</feature>
<feature type="strand" evidence="5">
    <location>
        <begin position="271"/>
        <end position="276"/>
    </location>
</feature>
<feature type="helix" evidence="5">
    <location>
        <begin position="282"/>
        <end position="294"/>
    </location>
</feature>
<feature type="strand" evidence="5">
    <location>
        <begin position="299"/>
        <end position="306"/>
    </location>
</feature>
<feature type="strand" evidence="5">
    <location>
        <begin position="309"/>
        <end position="311"/>
    </location>
</feature>
<feature type="helix" evidence="5">
    <location>
        <begin position="312"/>
        <end position="329"/>
    </location>
</feature>
<feature type="strand" evidence="5">
    <location>
        <begin position="334"/>
        <end position="339"/>
    </location>
</feature>
<feature type="strand" evidence="5">
    <location>
        <begin position="345"/>
        <end position="354"/>
    </location>
</feature>
<evidence type="ECO:0000269" key="1">
    <source>
    </source>
</evidence>
<evidence type="ECO:0000269" key="2">
    <source>
    </source>
</evidence>
<evidence type="ECO:0000305" key="3"/>
<evidence type="ECO:0000305" key="4">
    <source>
    </source>
</evidence>
<evidence type="ECO:0007829" key="5">
    <source>
        <dbReference type="PDB" id="4AUK"/>
    </source>
</evidence>
<sequence>MNKVVLLCRPGFEKECAAEITDKAGQREIFGFARVKENAGYVIYECYQPDDGDKLIRELPFSSLIFARQWFVVGELLQHLPPEDRITPIVGMLQGVVEKGGELRVEVADTNESKELLKFCRKFTVPLRAALRDAGVLANYETPKRPVVHVFFIAPGCCYTGYSYSNNNSPFYMGIPRLKFPADAPSRSTLKLEEAFHVFIPADEWDERLANGMWAVDLGACPGGWTYQLVKRNMWVYSVDNGPMAQSLMDTGQVTWLREDGFKFRPTRSNISWMVCDMVEKPAKVAALMAQWLVNGWCRETIFNLKLPMKKRYEEVSHNLAYIQAQLDEHGINAQIQARQLYHDREEVTVHVRRIWAAVGGRRDER</sequence>